<name>YFBN_ECOLI</name>
<accession>P76484</accession>
<accession>Q2MAM5</accession>
<reference key="1">
    <citation type="journal article" date="1997" name="Science">
        <title>The complete genome sequence of Escherichia coli K-12.</title>
        <authorList>
            <person name="Blattner F.R."/>
            <person name="Plunkett G. III"/>
            <person name="Bloch C.A."/>
            <person name="Perna N.T."/>
            <person name="Burland V."/>
            <person name="Riley M."/>
            <person name="Collado-Vides J."/>
            <person name="Glasner J.D."/>
            <person name="Rode C.K."/>
            <person name="Mayhew G.F."/>
            <person name="Gregor J."/>
            <person name="Davis N.W."/>
            <person name="Kirkpatrick H.A."/>
            <person name="Goeden M.A."/>
            <person name="Rose D.J."/>
            <person name="Mau B."/>
            <person name="Shao Y."/>
        </authorList>
    </citation>
    <scope>NUCLEOTIDE SEQUENCE [LARGE SCALE GENOMIC DNA]</scope>
    <source>
        <strain>K12 / MG1655 / ATCC 47076</strain>
    </source>
</reference>
<reference key="2">
    <citation type="journal article" date="2006" name="Mol. Syst. Biol.">
        <title>Highly accurate genome sequences of Escherichia coli K-12 strains MG1655 and W3110.</title>
        <authorList>
            <person name="Hayashi K."/>
            <person name="Morooka N."/>
            <person name="Yamamoto Y."/>
            <person name="Fujita K."/>
            <person name="Isono K."/>
            <person name="Choi S."/>
            <person name="Ohtsubo E."/>
            <person name="Baba T."/>
            <person name="Wanner B.L."/>
            <person name="Mori H."/>
            <person name="Horiuchi T."/>
        </authorList>
    </citation>
    <scope>NUCLEOTIDE SEQUENCE [LARGE SCALE GENOMIC DNA]</scope>
    <source>
        <strain>K12 / W3110 / ATCC 27325 / DSM 5911</strain>
    </source>
</reference>
<sequence>MEWLSEIRKLRKNVPVGIQVARRLLERTGGDVDEAIKLFHIDQINILTAKADVTHQEAENVLLATNYDIAEALRRIDEQRYTLTELILRKNKDAGDALNNIALAIEYEWDLKRKFWFGFADIQLLPPVLQTFMLVYEWHEYVGWEGMECGIFFESDHTHQQLQALGLLELAQKMVTARIRYDELKDKAENFHEITEDDIFKMLIIHCDQLAREVDSILLQFVKDNIDVFPCRHNRHEL</sequence>
<proteinExistence type="predicted"/>
<dbReference type="EMBL" id="U00096">
    <property type="protein sequence ID" value="AAC75333.1"/>
    <property type="molecule type" value="Genomic_DNA"/>
</dbReference>
<dbReference type="EMBL" id="AP009048">
    <property type="protein sequence ID" value="BAE76681.1"/>
    <property type="molecule type" value="Genomic_DNA"/>
</dbReference>
<dbReference type="PIR" id="G64998">
    <property type="entry name" value="G64998"/>
</dbReference>
<dbReference type="RefSeq" id="NP_416776.1">
    <property type="nucleotide sequence ID" value="NC_000913.3"/>
</dbReference>
<dbReference type="RefSeq" id="WP_000455114.1">
    <property type="nucleotide sequence ID" value="NZ_LN832404.1"/>
</dbReference>
<dbReference type="SMR" id="P76484"/>
<dbReference type="BioGRID" id="4261773">
    <property type="interactions" value="10"/>
</dbReference>
<dbReference type="BioGRID" id="851089">
    <property type="interactions" value="6"/>
</dbReference>
<dbReference type="DIP" id="DIP-11967N"/>
<dbReference type="FunCoup" id="P76484">
    <property type="interactions" value="45"/>
</dbReference>
<dbReference type="IntAct" id="P76484">
    <property type="interactions" value="9"/>
</dbReference>
<dbReference type="STRING" id="511145.b2273"/>
<dbReference type="jPOST" id="P76484"/>
<dbReference type="PaxDb" id="511145-b2273"/>
<dbReference type="EnsemblBacteria" id="AAC75333">
    <property type="protein sequence ID" value="AAC75333"/>
    <property type="gene ID" value="b2273"/>
</dbReference>
<dbReference type="GeneID" id="946748"/>
<dbReference type="KEGG" id="ecj:JW2268"/>
<dbReference type="KEGG" id="eco:b2273"/>
<dbReference type="KEGG" id="ecoc:C3026_12690"/>
<dbReference type="PATRIC" id="fig|511145.12.peg.2366"/>
<dbReference type="EchoBASE" id="EB3851"/>
<dbReference type="eggNOG" id="ENOG5030EUU">
    <property type="taxonomic scope" value="Bacteria"/>
</dbReference>
<dbReference type="HOGENOM" id="CLU_1164424_0_0_6"/>
<dbReference type="InParanoid" id="P76484"/>
<dbReference type="OMA" id="LAYEGWE"/>
<dbReference type="OrthoDB" id="8703200at2"/>
<dbReference type="BioCyc" id="EcoCyc:G7180-MONOMER"/>
<dbReference type="PRO" id="PR:P76484"/>
<dbReference type="Proteomes" id="UP000000625">
    <property type="component" value="Chromosome"/>
</dbReference>
<protein>
    <recommendedName>
        <fullName>Uncharacterized protein YfbN</fullName>
    </recommendedName>
</protein>
<organism>
    <name type="scientific">Escherichia coli (strain K12)</name>
    <dbReference type="NCBI Taxonomy" id="83333"/>
    <lineage>
        <taxon>Bacteria</taxon>
        <taxon>Pseudomonadati</taxon>
        <taxon>Pseudomonadota</taxon>
        <taxon>Gammaproteobacteria</taxon>
        <taxon>Enterobacterales</taxon>
        <taxon>Enterobacteriaceae</taxon>
        <taxon>Escherichia</taxon>
    </lineage>
</organism>
<keyword id="KW-1185">Reference proteome</keyword>
<gene>
    <name type="primary">yfbN</name>
    <name type="ordered locus">b2273</name>
    <name type="ordered locus">JW2268</name>
</gene>
<feature type="chain" id="PRO_0000169181" description="Uncharacterized protein YfbN">
    <location>
        <begin position="1"/>
        <end position="238"/>
    </location>
</feature>